<keyword id="KW-0002">3D-structure</keyword>
<keyword id="KW-0025">Alternative splicing</keyword>
<keyword id="KW-0175">Coiled coil</keyword>
<keyword id="KW-0407">Ion channel</keyword>
<keyword id="KW-0406">Ion transport</keyword>
<keyword id="KW-0472">Membrane</keyword>
<keyword id="KW-0630">Potassium</keyword>
<keyword id="KW-0631">Potassium channel</keyword>
<keyword id="KW-0633">Potassium transport</keyword>
<keyword id="KW-1185">Reference proteome</keyword>
<keyword id="KW-0812">Transmembrane</keyword>
<keyword id="KW-1133">Transmembrane helix</keyword>
<keyword id="KW-0813">Transport</keyword>
<keyword id="KW-0851">Voltage-gated channel</keyword>
<comment type="function">
    <text evidence="3 4">Probable modulatory (alpha) subunit of inward-rectifying potassium channels. Could mediate potassium uptake from the soil solution by plant roots in association with AKT1.</text>
</comment>
<comment type="subunit">
    <text evidence="4 5">The potassium channel is probably composed of a homo- or heterotetrameric complex of pore-forming subunits. May interact with AKT1 and AKT2 (PubMed:12678562). Interacts with SLAC1 (PubMed:27002025).</text>
</comment>
<comment type="subcellular location">
    <subcellularLocation>
        <location evidence="3">Membrane</location>
        <topology evidence="3">Multi-pass membrane protein</topology>
    </subcellularLocation>
</comment>
<comment type="alternative products">
    <event type="alternative splicing"/>
    <isoform>
        <id>P92960-1</id>
        <name>1</name>
        <sequence type="displayed"/>
    </isoform>
    <text>A number of isoforms are produced. According to EST sequences.</text>
</comment>
<comment type="tissue specificity">
    <text evidence="3 4">Expressed predominantly in root hairs and root endodermis and, at a lower level, in leaf nodes, trichomes, and hydathodes.</text>
</comment>
<comment type="induction">
    <text evidence="4">Strongly reduced in roots after 2,4-dichlorophenoxyacetic acid (2,4-D) treatment and after benzyladenine (BA) treatment. Strongly induced in shoots after NaCl treatment.</text>
</comment>
<comment type="domain">
    <text>The segment S4 is probably the voltage-sensor and is characterized by a series of positively charged amino acids. The pore-forming region H5 is enclosed by the transmembrane segments S5 and S6 in the Shaker-type (1P/6TM) and contains the GYGD signature motif which seems to be involved in potassium selectivity.</text>
</comment>
<comment type="domain">
    <text>The KHA domain (rich in hydrophobic and acidic residues) present in the C-terminal part is likely to be important for tetramerization.</text>
</comment>
<comment type="similarity">
    <text evidence="6">Belongs to the potassium channel family. Plant (TC 1.A.1.4) subfamily.</text>
</comment>
<sequence length="662" mass="75598">MSTTTTEARSPLPLLLRRGRSSTALSASTAEARSPLSILQFRRRSSKDVRNITSVSSSLLPAFGTFIEDDNPSSKPFIVLHFDRRYRLWELFLVILVGYSAWASLFELAFEKAAEGALLTIDLVVDFFFAVDIILTFFVSYLDNTTYLNVTDHKLIAKRYLKSVAFVMDVASTLPIQFIYKTITGDVGRGQAFGFLNLLRLWRLRRVAELFKRLEKDAHFNYFVIRVIKLLCVTIFWIHLAGCILYWIAYHYPRPTDTWIGSQVEDFKERSVWLGYTYSMYWSIVTLTTVGYGDLHAVNSREKTFNMFYMLFNIGLTSYIIGIMTNLVVHGALRTFAMRSAINDILRYTSKNRLPDTMREQMLAHMQLKFKTAELRQEEVLQDLPKAIRSSINQHLFRSIIEEAYLFKGFPEGLLVQLVSQIQAEYFPPKMEIILQNEIPTDFYVIVSGGVDIIASKGVSEQVLAKLGPGSMAGEIGVVFNIPQPFTVRTRRLSQVIRIGHHKFKEMVQSDNDVDAKMIIANFMTYLKGLNDELKKEIPFLRDLLDDADAQVQETVQSEETPQSNDEEIVTVSRHENGQIEERRREGVPKRVIIHGQAPPNQDNKNNGDSNGRLIILPDSIQLLFDLAEKKLGKRGSTIAMADGAHVEQIDALRENDHLYIF</sequence>
<dbReference type="EMBL" id="Z83202">
    <property type="protein sequence ID" value="CAB05669.1"/>
    <property type="molecule type" value="mRNA"/>
</dbReference>
<dbReference type="EMBL" id="U73325">
    <property type="protein sequence ID" value="AAC98810.1"/>
    <property type="molecule type" value="Genomic_DNA"/>
</dbReference>
<dbReference type="EMBL" id="U81239">
    <property type="protein sequence ID" value="AAD00503.1"/>
    <property type="molecule type" value="mRNA"/>
</dbReference>
<dbReference type="EMBL" id="AL022537">
    <property type="protein sequence ID" value="CAA18596.1"/>
    <property type="molecule type" value="Genomic_DNA"/>
</dbReference>
<dbReference type="EMBL" id="AL161581">
    <property type="protein sequence ID" value="CAB79982.1"/>
    <property type="molecule type" value="Genomic_DNA"/>
</dbReference>
<dbReference type="EMBL" id="CP002687">
    <property type="protein sequence ID" value="AEE86097.1"/>
    <property type="molecule type" value="Genomic_DNA"/>
</dbReference>
<dbReference type="EMBL" id="AY052233">
    <property type="protein sequence ID" value="AAK97703.1"/>
    <property type="molecule type" value="mRNA"/>
</dbReference>
<dbReference type="EMBL" id="BT003093">
    <property type="protein sequence ID" value="AAO23890.1"/>
    <property type="molecule type" value="mRNA"/>
</dbReference>
<dbReference type="PIR" id="T04461">
    <property type="entry name" value="T04461"/>
</dbReference>
<dbReference type="RefSeq" id="NP_194991.1">
    <molecule id="P92960-1"/>
    <property type="nucleotide sequence ID" value="NM_119417.4"/>
</dbReference>
<dbReference type="PDB" id="7WM1">
    <property type="method" value="EM"/>
    <property type="resolution" value="2.80 A"/>
    <property type="chains" value="B/D=1-662"/>
</dbReference>
<dbReference type="PDB" id="7XUF">
    <property type="method" value="EM"/>
    <property type="resolution" value="3.30 A"/>
    <property type="chains" value="A/C=1-662"/>
</dbReference>
<dbReference type="PDBsum" id="7WM1"/>
<dbReference type="PDBsum" id="7XUF"/>
<dbReference type="EMDB" id="EMD-32597"/>
<dbReference type="EMDB" id="EMD-33467"/>
<dbReference type="SMR" id="P92960"/>
<dbReference type="BioGRID" id="14686">
    <property type="interactions" value="19"/>
</dbReference>
<dbReference type="FunCoup" id="P92960">
    <property type="interactions" value="38"/>
</dbReference>
<dbReference type="IntAct" id="P92960">
    <property type="interactions" value="14"/>
</dbReference>
<dbReference type="STRING" id="3702.P92960"/>
<dbReference type="TCDB" id="1.A.1.4.9">
    <property type="family name" value="the voltage-gated ion channel (vic) superfamily"/>
</dbReference>
<dbReference type="iPTMnet" id="P92960"/>
<dbReference type="PaxDb" id="3702-AT4G32650.1"/>
<dbReference type="ProteomicsDB" id="232274">
    <molecule id="P92960-1"/>
</dbReference>
<dbReference type="EnsemblPlants" id="AT4G32650.1">
    <molecule id="P92960-1"/>
    <property type="protein sequence ID" value="AT4G32650.1"/>
    <property type="gene ID" value="AT4G32650"/>
</dbReference>
<dbReference type="GeneID" id="829400"/>
<dbReference type="Gramene" id="AT4G32650.1">
    <molecule id="P92960-1"/>
    <property type="protein sequence ID" value="AT4G32650.1"/>
    <property type="gene ID" value="AT4G32650"/>
</dbReference>
<dbReference type="KEGG" id="ath:AT4G32650"/>
<dbReference type="Araport" id="AT4G32650"/>
<dbReference type="TAIR" id="AT4G32650">
    <property type="gene designation" value="KAT3"/>
</dbReference>
<dbReference type="eggNOG" id="KOG0498">
    <property type="taxonomic scope" value="Eukaryota"/>
</dbReference>
<dbReference type="InParanoid" id="P92960"/>
<dbReference type="OrthoDB" id="426293at2759"/>
<dbReference type="PhylomeDB" id="P92960"/>
<dbReference type="PRO" id="PR:P92960"/>
<dbReference type="Proteomes" id="UP000006548">
    <property type="component" value="Chromosome 4"/>
</dbReference>
<dbReference type="ExpressionAtlas" id="P92960">
    <property type="expression patterns" value="baseline and differential"/>
</dbReference>
<dbReference type="GO" id="GO:0005783">
    <property type="term" value="C:endoplasmic reticulum"/>
    <property type="evidence" value="ECO:0000314"/>
    <property type="project" value="TAIR"/>
</dbReference>
<dbReference type="GO" id="GO:0034702">
    <property type="term" value="C:monoatomic ion channel complex"/>
    <property type="evidence" value="ECO:0007669"/>
    <property type="project" value="UniProtKB-KW"/>
</dbReference>
<dbReference type="GO" id="GO:0005886">
    <property type="term" value="C:plasma membrane"/>
    <property type="evidence" value="ECO:0000314"/>
    <property type="project" value="TAIR"/>
</dbReference>
<dbReference type="GO" id="GO:0005249">
    <property type="term" value="F:voltage-gated potassium channel activity"/>
    <property type="evidence" value="ECO:0007669"/>
    <property type="project" value="InterPro"/>
</dbReference>
<dbReference type="GO" id="GO:0071805">
    <property type="term" value="P:potassium ion transmembrane transport"/>
    <property type="evidence" value="ECO:0000315"/>
    <property type="project" value="TAIR"/>
</dbReference>
<dbReference type="GO" id="GO:0009624">
    <property type="term" value="P:response to nematode"/>
    <property type="evidence" value="ECO:0007007"/>
    <property type="project" value="TAIR"/>
</dbReference>
<dbReference type="CDD" id="cd00038">
    <property type="entry name" value="CAP_ED"/>
    <property type="match status" value="1"/>
</dbReference>
<dbReference type="FunFam" id="2.60.120.10:FF:000074">
    <property type="entry name" value="Potassium channel KAT2"/>
    <property type="match status" value="1"/>
</dbReference>
<dbReference type="FunFam" id="1.10.287.70:FF:000123">
    <property type="entry name" value="Potassium channel KAT3"/>
    <property type="match status" value="1"/>
</dbReference>
<dbReference type="Gene3D" id="1.10.287.70">
    <property type="match status" value="1"/>
</dbReference>
<dbReference type="Gene3D" id="2.60.120.10">
    <property type="entry name" value="Jelly Rolls"/>
    <property type="match status" value="1"/>
</dbReference>
<dbReference type="InterPro" id="IPR000595">
    <property type="entry name" value="cNMP-bd_dom"/>
</dbReference>
<dbReference type="InterPro" id="IPR018490">
    <property type="entry name" value="cNMP-bd_dom_sf"/>
</dbReference>
<dbReference type="InterPro" id="IPR005821">
    <property type="entry name" value="Ion_trans_dom"/>
</dbReference>
<dbReference type="InterPro" id="IPR003938">
    <property type="entry name" value="K_chnl_volt-dep_EAG/ELK/ERG"/>
</dbReference>
<dbReference type="InterPro" id="IPR045319">
    <property type="entry name" value="KAT/AKT"/>
</dbReference>
<dbReference type="InterPro" id="IPR021789">
    <property type="entry name" value="KHA_dom"/>
</dbReference>
<dbReference type="InterPro" id="IPR014710">
    <property type="entry name" value="RmlC-like_jellyroll"/>
</dbReference>
<dbReference type="PANTHER" id="PTHR45743">
    <property type="entry name" value="POTASSIUM CHANNEL AKT1"/>
    <property type="match status" value="1"/>
</dbReference>
<dbReference type="PANTHER" id="PTHR45743:SF27">
    <property type="entry name" value="POTASSIUM CHANNEL KAT3"/>
    <property type="match status" value="1"/>
</dbReference>
<dbReference type="Pfam" id="PF00027">
    <property type="entry name" value="cNMP_binding"/>
    <property type="match status" value="1"/>
</dbReference>
<dbReference type="Pfam" id="PF00520">
    <property type="entry name" value="Ion_trans"/>
    <property type="match status" value="1"/>
</dbReference>
<dbReference type="Pfam" id="PF11834">
    <property type="entry name" value="KHA"/>
    <property type="match status" value="1"/>
</dbReference>
<dbReference type="PRINTS" id="PR01463">
    <property type="entry name" value="EAGCHANLFMLY"/>
</dbReference>
<dbReference type="SMART" id="SM00100">
    <property type="entry name" value="cNMP"/>
    <property type="match status" value="1"/>
</dbReference>
<dbReference type="SUPFAM" id="SSF51206">
    <property type="entry name" value="cAMP-binding domain-like"/>
    <property type="match status" value="1"/>
</dbReference>
<dbReference type="SUPFAM" id="SSF81324">
    <property type="entry name" value="Voltage-gated potassium channels"/>
    <property type="match status" value="1"/>
</dbReference>
<dbReference type="PROSITE" id="PS50042">
    <property type="entry name" value="CNMP_BINDING_3"/>
    <property type="match status" value="1"/>
</dbReference>
<dbReference type="PROSITE" id="PS51490">
    <property type="entry name" value="KHA"/>
    <property type="match status" value="1"/>
</dbReference>
<name>KAT3_ARATH</name>
<proteinExistence type="evidence at protein level"/>
<feature type="chain" id="PRO_0000054127" description="Potassium channel KAT3">
    <location>
        <begin position="1"/>
        <end position="662"/>
    </location>
</feature>
<feature type="topological domain" description="Cytoplasmic" evidence="1">
    <location>
        <begin position="1"/>
        <end position="90"/>
    </location>
</feature>
<feature type="transmembrane region" description="Helical; Name=Segment S1" evidence="1">
    <location>
        <begin position="91"/>
        <end position="111"/>
    </location>
</feature>
<feature type="topological domain" description="Extracellular" evidence="1">
    <location>
        <begin position="112"/>
        <end position="118"/>
    </location>
</feature>
<feature type="transmembrane region" description="Helical; Name=Segment S2" evidence="1">
    <location>
        <begin position="119"/>
        <end position="139"/>
    </location>
</feature>
<feature type="topological domain" description="Cytoplasmic" evidence="1">
    <location>
        <begin position="140"/>
        <end position="163"/>
    </location>
</feature>
<feature type="transmembrane region" description="Helical; Name=Segment S3" evidence="1">
    <location>
        <begin position="164"/>
        <end position="184"/>
    </location>
</feature>
<feature type="topological domain" description="Extracellular" evidence="1">
    <location>
        <begin position="185"/>
        <end position="194"/>
    </location>
</feature>
<feature type="transmembrane region" description="Helical; Voltage-sensor; Name=Segment S4" evidence="1">
    <location>
        <begin position="195"/>
        <end position="215"/>
    </location>
</feature>
<feature type="topological domain" description="Cytoplasmic" evidence="1">
    <location>
        <begin position="216"/>
        <end position="229"/>
    </location>
</feature>
<feature type="transmembrane region" description="Helical; Name=Segment S5" evidence="1">
    <location>
        <begin position="230"/>
        <end position="250"/>
    </location>
</feature>
<feature type="topological domain" description="Extracellular" evidence="1">
    <location>
        <begin position="251"/>
        <end position="277"/>
    </location>
</feature>
<feature type="intramembrane region" description="Pore-forming; Name=Segment H5" evidence="1">
    <location>
        <begin position="278"/>
        <end position="297"/>
    </location>
</feature>
<feature type="topological domain" description="Extracellular" evidence="1">
    <location>
        <begin position="298"/>
        <end position="301"/>
    </location>
</feature>
<feature type="transmembrane region" description="Helical; Name=Segment S6" evidence="1">
    <location>
        <begin position="302"/>
        <end position="322"/>
    </location>
</feature>
<feature type="topological domain" description="Cytoplasmic" evidence="1">
    <location>
        <begin position="323"/>
        <end position="662"/>
    </location>
</feature>
<feature type="domain" description="KHA" evidence="2">
    <location>
        <begin position="591"/>
        <end position="662"/>
    </location>
</feature>
<feature type="coiled-coil region" evidence="1">
    <location>
        <begin position="528"/>
        <end position="558"/>
    </location>
</feature>
<feature type="binding site">
    <location>
        <begin position="406"/>
        <end position="527"/>
    </location>
    <ligand>
        <name>a nucleoside 3',5'-cyclic phosphate</name>
        <dbReference type="ChEBI" id="CHEBI:58464"/>
    </ligand>
</feature>
<feature type="helix" evidence="7">
    <location>
        <begin position="55"/>
        <end position="59"/>
    </location>
</feature>
<feature type="strand" evidence="8">
    <location>
        <begin position="69"/>
        <end position="72"/>
    </location>
</feature>
<feature type="helix" evidence="7">
    <location>
        <begin position="84"/>
        <end position="109"/>
    </location>
</feature>
<feature type="strand" evidence="7">
    <location>
        <begin position="111"/>
        <end position="113"/>
    </location>
</feature>
<feature type="turn" evidence="7">
    <location>
        <begin position="114"/>
        <end position="118"/>
    </location>
</feature>
<feature type="helix" evidence="7">
    <location>
        <begin position="121"/>
        <end position="128"/>
    </location>
</feature>
<feature type="turn" evidence="7">
    <location>
        <begin position="129"/>
        <end position="133"/>
    </location>
</feature>
<feature type="strand" evidence="7">
    <location>
        <begin position="144"/>
        <end position="146"/>
    </location>
</feature>
<feature type="helix" evidence="7">
    <location>
        <begin position="153"/>
        <end position="156"/>
    </location>
</feature>
<feature type="turn" evidence="7">
    <location>
        <begin position="157"/>
        <end position="159"/>
    </location>
</feature>
<feature type="helix" evidence="7">
    <location>
        <begin position="164"/>
        <end position="172"/>
    </location>
</feature>
<feature type="helix" evidence="7">
    <location>
        <begin position="176"/>
        <end position="179"/>
    </location>
</feature>
<feature type="turn" evidence="7">
    <location>
        <begin position="180"/>
        <end position="182"/>
    </location>
</feature>
<feature type="strand" evidence="7">
    <location>
        <begin position="183"/>
        <end position="186"/>
    </location>
</feature>
<feature type="turn" evidence="7">
    <location>
        <begin position="191"/>
        <end position="196"/>
    </location>
</feature>
<feature type="helix" evidence="7">
    <location>
        <begin position="197"/>
        <end position="204"/>
    </location>
</feature>
<feature type="helix" evidence="7">
    <location>
        <begin position="205"/>
        <end position="213"/>
    </location>
</feature>
<feature type="strand" evidence="7">
    <location>
        <begin position="214"/>
        <end position="216"/>
    </location>
</feature>
<feature type="strand" evidence="8">
    <location>
        <begin position="218"/>
        <end position="220"/>
    </location>
</feature>
<feature type="helix" evidence="7">
    <location>
        <begin position="222"/>
        <end position="250"/>
    </location>
</feature>
<feature type="strand" evidence="7">
    <location>
        <begin position="257"/>
        <end position="260"/>
    </location>
</feature>
<feature type="turn" evidence="7">
    <location>
        <begin position="261"/>
        <end position="263"/>
    </location>
</feature>
<feature type="turn" evidence="7">
    <location>
        <begin position="265"/>
        <end position="268"/>
    </location>
</feature>
<feature type="helix" evidence="7">
    <location>
        <begin position="272"/>
        <end position="287"/>
    </location>
</feature>
<feature type="strand" evidence="7">
    <location>
        <begin position="293"/>
        <end position="295"/>
    </location>
</feature>
<feature type="helix" evidence="7">
    <location>
        <begin position="300"/>
        <end position="324"/>
    </location>
</feature>
<feature type="turn" evidence="7">
    <location>
        <begin position="325"/>
        <end position="329"/>
    </location>
</feature>
<feature type="helix" evidence="7">
    <location>
        <begin position="335"/>
        <end position="351"/>
    </location>
</feature>
<feature type="helix" evidence="7">
    <location>
        <begin position="356"/>
        <end position="375"/>
    </location>
</feature>
<feature type="strand" evidence="8">
    <location>
        <begin position="382"/>
        <end position="384"/>
    </location>
</feature>
<feature type="helix" evidence="7">
    <location>
        <begin position="386"/>
        <end position="396"/>
    </location>
</feature>
<feature type="helix" evidence="7">
    <location>
        <begin position="398"/>
        <end position="402"/>
    </location>
</feature>
<feature type="strand" evidence="7">
    <location>
        <begin position="403"/>
        <end position="409"/>
    </location>
</feature>
<feature type="helix" evidence="7">
    <location>
        <begin position="412"/>
        <end position="419"/>
    </location>
</feature>
<feature type="strand" evidence="7">
    <location>
        <begin position="424"/>
        <end position="427"/>
    </location>
</feature>
<feature type="strand" evidence="7">
    <location>
        <begin position="432"/>
        <end position="434"/>
    </location>
</feature>
<feature type="strand" evidence="7">
    <location>
        <begin position="444"/>
        <end position="449"/>
    </location>
</feature>
<feature type="strand" evidence="7">
    <location>
        <begin position="451"/>
        <end position="455"/>
    </location>
</feature>
<feature type="strand" evidence="8">
    <location>
        <begin position="457"/>
        <end position="459"/>
    </location>
</feature>
<feature type="strand" evidence="7">
    <location>
        <begin position="462"/>
        <end position="467"/>
    </location>
</feature>
<feature type="strand" evidence="7">
    <location>
        <begin position="472"/>
        <end position="474"/>
    </location>
</feature>
<feature type="helix" evidence="7">
    <location>
        <begin position="475"/>
        <end position="480"/>
    </location>
</feature>
<feature type="strand" evidence="7">
    <location>
        <begin position="486"/>
        <end position="498"/>
    </location>
</feature>
<feature type="turn" evidence="7">
    <location>
        <begin position="501"/>
        <end position="503"/>
    </location>
</feature>
<feature type="helix" evidence="7">
    <location>
        <begin position="504"/>
        <end position="509"/>
    </location>
</feature>
<feature type="helix" evidence="7">
    <location>
        <begin position="519"/>
        <end position="525"/>
    </location>
</feature>
<gene>
    <name type="primary">KAT3</name>
    <name type="synonym">AKT4</name>
    <name type="synonym">KC1</name>
    <name type="ordered locus">At4g32650</name>
    <name type="ORF">F4D11.150</name>
</gene>
<protein>
    <recommendedName>
        <fullName>Potassium channel KAT3</fullName>
    </recommendedName>
    <alternativeName>
        <fullName>AKT4</fullName>
    </alternativeName>
    <alternativeName>
        <fullName>AtKC1</fullName>
    </alternativeName>
    <alternativeName>
        <fullName>Potassium channel TKC</fullName>
    </alternativeName>
</protein>
<evidence type="ECO:0000255" key="1"/>
<evidence type="ECO:0000255" key="2">
    <source>
        <dbReference type="PROSITE-ProRule" id="PRU00823"/>
    </source>
</evidence>
<evidence type="ECO:0000269" key="3">
    <source>
    </source>
</evidence>
<evidence type="ECO:0000269" key="4">
    <source>
    </source>
</evidence>
<evidence type="ECO:0000269" key="5">
    <source>
    </source>
</evidence>
<evidence type="ECO:0000305" key="6"/>
<evidence type="ECO:0007829" key="7">
    <source>
        <dbReference type="PDB" id="7WM1"/>
    </source>
</evidence>
<evidence type="ECO:0007829" key="8">
    <source>
        <dbReference type="PDB" id="7XUF"/>
    </source>
</evidence>
<reference key="1">
    <citation type="submission" date="1996-12" db="EMBL/GenBank/DDBJ databases">
        <title>Characterisation of a putative chloroplast potassium channel in Arabidopsis thaliana.</title>
        <authorList>
            <person name="Saalbach G."/>
        </authorList>
    </citation>
    <scope>NUCLEOTIDE SEQUENCE [MRNA]</scope>
    <source>
        <strain>cv. Columbia</strain>
        <tissue>Leaf</tissue>
    </source>
</reference>
<reference key="2">
    <citation type="submission" date="1996-12" db="EMBL/GenBank/DDBJ databases">
        <authorList>
            <person name="Kuech A."/>
            <person name="Reintanz B."/>
            <person name="Redhead C."/>
            <person name="Palme K."/>
        </authorList>
    </citation>
    <scope>NUCLEOTIDE SEQUENCE [GENOMIC DNA / MRNA]</scope>
    <source>
        <strain>cv. Columbia</strain>
    </source>
</reference>
<reference key="3">
    <citation type="journal article" date="1999" name="Nature">
        <title>Sequence and analysis of chromosome 4 of the plant Arabidopsis thaliana.</title>
        <authorList>
            <person name="Mayer K.F.X."/>
            <person name="Schueller C."/>
            <person name="Wambutt R."/>
            <person name="Murphy G."/>
            <person name="Volckaert G."/>
            <person name="Pohl T."/>
            <person name="Duesterhoeft A."/>
            <person name="Stiekema W."/>
            <person name="Entian K.-D."/>
            <person name="Terryn N."/>
            <person name="Harris B."/>
            <person name="Ansorge W."/>
            <person name="Brandt P."/>
            <person name="Grivell L.A."/>
            <person name="Rieger M."/>
            <person name="Weichselgartner M."/>
            <person name="de Simone V."/>
            <person name="Obermaier B."/>
            <person name="Mache R."/>
            <person name="Mueller M."/>
            <person name="Kreis M."/>
            <person name="Delseny M."/>
            <person name="Puigdomenech P."/>
            <person name="Watson M."/>
            <person name="Schmidtheini T."/>
            <person name="Reichert B."/>
            <person name="Portetelle D."/>
            <person name="Perez-Alonso M."/>
            <person name="Boutry M."/>
            <person name="Bancroft I."/>
            <person name="Vos P."/>
            <person name="Hoheisel J."/>
            <person name="Zimmermann W."/>
            <person name="Wedler H."/>
            <person name="Ridley P."/>
            <person name="Langham S.-A."/>
            <person name="McCullagh B."/>
            <person name="Bilham L."/>
            <person name="Robben J."/>
            <person name="van der Schueren J."/>
            <person name="Grymonprez B."/>
            <person name="Chuang Y.-J."/>
            <person name="Vandenbussche F."/>
            <person name="Braeken M."/>
            <person name="Weltjens I."/>
            <person name="Voet M."/>
            <person name="Bastiaens I."/>
            <person name="Aert R."/>
            <person name="Defoor E."/>
            <person name="Weitzenegger T."/>
            <person name="Bothe G."/>
            <person name="Ramsperger U."/>
            <person name="Hilbert H."/>
            <person name="Braun M."/>
            <person name="Holzer E."/>
            <person name="Brandt A."/>
            <person name="Peters S."/>
            <person name="van Staveren M."/>
            <person name="Dirkse W."/>
            <person name="Mooijman P."/>
            <person name="Klein Lankhorst R."/>
            <person name="Rose M."/>
            <person name="Hauf J."/>
            <person name="Koetter P."/>
            <person name="Berneiser S."/>
            <person name="Hempel S."/>
            <person name="Feldpausch M."/>
            <person name="Lamberth S."/>
            <person name="Van den Daele H."/>
            <person name="De Keyser A."/>
            <person name="Buysshaert C."/>
            <person name="Gielen J."/>
            <person name="Villarroel R."/>
            <person name="De Clercq R."/>
            <person name="van Montagu M."/>
            <person name="Rogers J."/>
            <person name="Cronin A."/>
            <person name="Quail M.A."/>
            <person name="Bray-Allen S."/>
            <person name="Clark L."/>
            <person name="Doggett J."/>
            <person name="Hall S."/>
            <person name="Kay M."/>
            <person name="Lennard N."/>
            <person name="McLay K."/>
            <person name="Mayes R."/>
            <person name="Pettett A."/>
            <person name="Rajandream M.A."/>
            <person name="Lyne M."/>
            <person name="Benes V."/>
            <person name="Rechmann S."/>
            <person name="Borkova D."/>
            <person name="Bloecker H."/>
            <person name="Scharfe M."/>
            <person name="Grimm M."/>
            <person name="Loehnert T.-H."/>
            <person name="Dose S."/>
            <person name="de Haan M."/>
            <person name="Maarse A.C."/>
            <person name="Schaefer M."/>
            <person name="Mueller-Auer S."/>
            <person name="Gabel C."/>
            <person name="Fuchs M."/>
            <person name="Fartmann B."/>
            <person name="Granderath K."/>
            <person name="Dauner D."/>
            <person name="Herzl A."/>
            <person name="Neumann S."/>
            <person name="Argiriou A."/>
            <person name="Vitale D."/>
            <person name="Liguori R."/>
            <person name="Piravandi E."/>
            <person name="Massenet O."/>
            <person name="Quigley F."/>
            <person name="Clabauld G."/>
            <person name="Muendlein A."/>
            <person name="Felber R."/>
            <person name="Schnabl S."/>
            <person name="Hiller R."/>
            <person name="Schmidt W."/>
            <person name="Lecharny A."/>
            <person name="Aubourg S."/>
            <person name="Chefdor F."/>
            <person name="Cooke R."/>
            <person name="Berger C."/>
            <person name="Monfort A."/>
            <person name="Casacuberta E."/>
            <person name="Gibbons T."/>
            <person name="Weber N."/>
            <person name="Vandenbol M."/>
            <person name="Bargues M."/>
            <person name="Terol J."/>
            <person name="Torres A."/>
            <person name="Perez-Perez A."/>
            <person name="Purnelle B."/>
            <person name="Bent E."/>
            <person name="Johnson S."/>
            <person name="Tacon D."/>
            <person name="Jesse T."/>
            <person name="Heijnen L."/>
            <person name="Schwarz S."/>
            <person name="Scholler P."/>
            <person name="Heber S."/>
            <person name="Francs P."/>
            <person name="Bielke C."/>
            <person name="Frishman D."/>
            <person name="Haase D."/>
            <person name="Lemcke K."/>
            <person name="Mewes H.-W."/>
            <person name="Stocker S."/>
            <person name="Zaccaria P."/>
            <person name="Bevan M."/>
            <person name="Wilson R.K."/>
            <person name="de la Bastide M."/>
            <person name="Habermann K."/>
            <person name="Parnell L."/>
            <person name="Dedhia N."/>
            <person name="Gnoj L."/>
            <person name="Schutz K."/>
            <person name="Huang E."/>
            <person name="Spiegel L."/>
            <person name="Sekhon M."/>
            <person name="Murray J."/>
            <person name="Sheet P."/>
            <person name="Cordes M."/>
            <person name="Abu-Threideh J."/>
            <person name="Stoneking T."/>
            <person name="Kalicki J."/>
            <person name="Graves T."/>
            <person name="Harmon G."/>
            <person name="Edwards J."/>
            <person name="Latreille P."/>
            <person name="Courtney L."/>
            <person name="Cloud J."/>
            <person name="Abbott A."/>
            <person name="Scott K."/>
            <person name="Johnson D."/>
            <person name="Minx P."/>
            <person name="Bentley D."/>
            <person name="Fulton B."/>
            <person name="Miller N."/>
            <person name="Greco T."/>
            <person name="Kemp K."/>
            <person name="Kramer J."/>
            <person name="Fulton L."/>
            <person name="Mardis E."/>
            <person name="Dante M."/>
            <person name="Pepin K."/>
            <person name="Hillier L.W."/>
            <person name="Nelson J."/>
            <person name="Spieth J."/>
            <person name="Ryan E."/>
            <person name="Andrews S."/>
            <person name="Geisel C."/>
            <person name="Layman D."/>
            <person name="Du H."/>
            <person name="Ali J."/>
            <person name="Berghoff A."/>
            <person name="Jones K."/>
            <person name="Drone K."/>
            <person name="Cotton M."/>
            <person name="Joshu C."/>
            <person name="Antonoiu B."/>
            <person name="Zidanic M."/>
            <person name="Strong C."/>
            <person name="Sun H."/>
            <person name="Lamar B."/>
            <person name="Yordan C."/>
            <person name="Ma P."/>
            <person name="Zhong J."/>
            <person name="Preston R."/>
            <person name="Vil D."/>
            <person name="Shekher M."/>
            <person name="Matero A."/>
            <person name="Shah R."/>
            <person name="Swaby I.K."/>
            <person name="O'Shaughnessy A."/>
            <person name="Rodriguez M."/>
            <person name="Hoffman J."/>
            <person name="Till S."/>
            <person name="Granat S."/>
            <person name="Shohdy N."/>
            <person name="Hasegawa A."/>
            <person name="Hameed A."/>
            <person name="Lodhi M."/>
            <person name="Johnson A."/>
            <person name="Chen E."/>
            <person name="Marra M.A."/>
            <person name="Martienssen R."/>
            <person name="McCombie W.R."/>
        </authorList>
    </citation>
    <scope>NUCLEOTIDE SEQUENCE [LARGE SCALE GENOMIC DNA]</scope>
    <source>
        <strain>cv. Columbia</strain>
    </source>
</reference>
<reference key="4">
    <citation type="journal article" date="2017" name="Plant J.">
        <title>Araport11: a complete reannotation of the Arabidopsis thaliana reference genome.</title>
        <authorList>
            <person name="Cheng C.Y."/>
            <person name="Krishnakumar V."/>
            <person name="Chan A.P."/>
            <person name="Thibaud-Nissen F."/>
            <person name="Schobel S."/>
            <person name="Town C.D."/>
        </authorList>
    </citation>
    <scope>GENOME REANNOTATION</scope>
    <source>
        <strain>cv. Columbia</strain>
    </source>
</reference>
<reference key="5">
    <citation type="journal article" date="2003" name="Science">
        <title>Empirical analysis of transcriptional activity in the Arabidopsis genome.</title>
        <authorList>
            <person name="Yamada K."/>
            <person name="Lim J."/>
            <person name="Dale J.M."/>
            <person name="Chen H."/>
            <person name="Shinn P."/>
            <person name="Palm C.J."/>
            <person name="Southwick A.M."/>
            <person name="Wu H.C."/>
            <person name="Kim C.J."/>
            <person name="Nguyen M."/>
            <person name="Pham P.K."/>
            <person name="Cheuk R.F."/>
            <person name="Karlin-Newmann G."/>
            <person name="Liu S.X."/>
            <person name="Lam B."/>
            <person name="Sakano H."/>
            <person name="Wu T."/>
            <person name="Yu G."/>
            <person name="Miranda M."/>
            <person name="Quach H.L."/>
            <person name="Tripp M."/>
            <person name="Chang C.H."/>
            <person name="Lee J.M."/>
            <person name="Toriumi M.J."/>
            <person name="Chan M.M."/>
            <person name="Tang C.C."/>
            <person name="Onodera C.S."/>
            <person name="Deng J.M."/>
            <person name="Akiyama K."/>
            <person name="Ansari Y."/>
            <person name="Arakawa T."/>
            <person name="Banh J."/>
            <person name="Banno F."/>
            <person name="Bowser L."/>
            <person name="Brooks S.Y."/>
            <person name="Carninci P."/>
            <person name="Chao Q."/>
            <person name="Choy N."/>
            <person name="Enju A."/>
            <person name="Goldsmith A.D."/>
            <person name="Gurjal M."/>
            <person name="Hansen N.F."/>
            <person name="Hayashizaki Y."/>
            <person name="Johnson-Hopson C."/>
            <person name="Hsuan V.W."/>
            <person name="Iida K."/>
            <person name="Karnes M."/>
            <person name="Khan S."/>
            <person name="Koesema E."/>
            <person name="Ishida J."/>
            <person name="Jiang P.X."/>
            <person name="Jones T."/>
            <person name="Kawai J."/>
            <person name="Kamiya A."/>
            <person name="Meyers C."/>
            <person name="Nakajima M."/>
            <person name="Narusaka M."/>
            <person name="Seki M."/>
            <person name="Sakurai T."/>
            <person name="Satou M."/>
            <person name="Tamse R."/>
            <person name="Vaysberg M."/>
            <person name="Wallender E.K."/>
            <person name="Wong C."/>
            <person name="Yamamura Y."/>
            <person name="Yuan S."/>
            <person name="Shinozaki K."/>
            <person name="Davis R.W."/>
            <person name="Theologis A."/>
            <person name="Ecker J.R."/>
        </authorList>
    </citation>
    <scope>NUCLEOTIDE SEQUENCE [LARGE SCALE MRNA]</scope>
    <source>
        <strain>cv. Columbia</strain>
    </source>
</reference>
<reference key="6">
    <citation type="journal article" date="2001" name="Plant Physiol.">
        <title>Phylogenetic relationships within cation transporter families of Arabidopsis.</title>
        <authorList>
            <person name="Maeser P."/>
            <person name="Thomine S."/>
            <person name="Schroeder J.I."/>
            <person name="Ward J.M."/>
            <person name="Hirschi K."/>
            <person name="Sze H."/>
            <person name="Talke I.N."/>
            <person name="Amtmann A."/>
            <person name="Maathuis F.J.M."/>
            <person name="Sanders D."/>
            <person name="Harper J.F."/>
            <person name="Tchieu J."/>
            <person name="Gribskov M."/>
            <person name="Persans M.W."/>
            <person name="Salt D.E."/>
            <person name="Kim S.A."/>
            <person name="Guerinot M.L."/>
        </authorList>
    </citation>
    <scope>GENE FAMILY</scope>
    <scope>NOMENCLATURE</scope>
</reference>
<reference key="7">
    <citation type="journal article" date="2002" name="Proc. Natl. Acad. Sci. U.S.A.">
        <title>AtKC1, a silent Arabidopsis potassium channel alpha-subunit modulates root hair K+ influx.</title>
        <authorList>
            <person name="Reintanz B."/>
            <person name="Szyroki A."/>
            <person name="Ivashikina N."/>
            <person name="Ache P."/>
            <person name="Godde M."/>
            <person name="Becker D."/>
            <person name="Palme K."/>
            <person name="Hedrich R."/>
        </authorList>
    </citation>
    <scope>SUBCELLULAR LOCATION</scope>
    <scope>TISSUE SPECIFICITY</scope>
    <scope>CHARACTERIZATION</scope>
    <scope>FUNCTION</scope>
</reference>
<reference key="8">
    <citation type="journal article" date="2003" name="Plant Mol. Biol.">
        <title>Regulated expression of Arabidopsis shaker K(+) channel genes involved in K(+) uptake and distribution in the plant.</title>
        <authorList>
            <person name="Pilot G."/>
            <person name="Gaymard F."/>
            <person name="Mouline K."/>
            <person name="Cherel I."/>
            <person name="Sentenac H."/>
        </authorList>
    </citation>
    <scope>FUNCTION</scope>
    <scope>INTERACTION WITH AKT1 AND AKT2</scope>
    <scope>TISSUE SPECIFICITY</scope>
    <scope>INDUCTION</scope>
</reference>
<reference key="9">
    <citation type="journal article" date="2016" name="Plant Cell">
        <title>S-type anion channels SLAC1 and SLAH3 function as essential negative regulators of inward K+ channels and stomatal opening in Arabidopsis.</title>
        <authorList>
            <person name="Zhang A."/>
            <person name="Ren H.M."/>
            <person name="Tan Y.Q."/>
            <person name="Qi G.N."/>
            <person name="Yao F.Y."/>
            <person name="Wu G.L."/>
            <person name="Yang L.W."/>
            <person name="Hussain J."/>
            <person name="Sun S.J."/>
            <person name="Wang Y.F."/>
        </authorList>
    </citation>
    <scope>INTERACTION WITH SLAC1</scope>
</reference>
<organism>
    <name type="scientific">Arabidopsis thaliana</name>
    <name type="common">Mouse-ear cress</name>
    <dbReference type="NCBI Taxonomy" id="3702"/>
    <lineage>
        <taxon>Eukaryota</taxon>
        <taxon>Viridiplantae</taxon>
        <taxon>Streptophyta</taxon>
        <taxon>Embryophyta</taxon>
        <taxon>Tracheophyta</taxon>
        <taxon>Spermatophyta</taxon>
        <taxon>Magnoliopsida</taxon>
        <taxon>eudicotyledons</taxon>
        <taxon>Gunneridae</taxon>
        <taxon>Pentapetalae</taxon>
        <taxon>rosids</taxon>
        <taxon>malvids</taxon>
        <taxon>Brassicales</taxon>
        <taxon>Brassicaceae</taxon>
        <taxon>Camelineae</taxon>
        <taxon>Arabidopsis</taxon>
    </lineage>
</organism>
<accession>P92960</accession>